<accession>B5ZNB1</accession>
<evidence type="ECO:0000255" key="1">
    <source>
        <dbReference type="HAMAP-Rule" id="MF_00206"/>
    </source>
</evidence>
<evidence type="ECO:0000255" key="2">
    <source>
        <dbReference type="PROSITE-ProRule" id="PRU01266"/>
    </source>
</evidence>
<gene>
    <name evidence="1" type="primary">lipA</name>
    <name type="ordered locus">Rleg2_1611</name>
</gene>
<dbReference type="EC" id="2.8.1.8" evidence="1"/>
<dbReference type="EMBL" id="CP001191">
    <property type="protein sequence ID" value="ACI54901.1"/>
    <property type="molecule type" value="Genomic_DNA"/>
</dbReference>
<dbReference type="RefSeq" id="WP_003586642.1">
    <property type="nucleotide sequence ID" value="NC_011369.1"/>
</dbReference>
<dbReference type="SMR" id="B5ZNB1"/>
<dbReference type="STRING" id="395492.Rleg2_1611"/>
<dbReference type="KEGG" id="rlt:Rleg2_1611"/>
<dbReference type="eggNOG" id="COG0320">
    <property type="taxonomic scope" value="Bacteria"/>
</dbReference>
<dbReference type="HOGENOM" id="CLU_033144_2_1_5"/>
<dbReference type="UniPathway" id="UPA00538">
    <property type="reaction ID" value="UER00593"/>
</dbReference>
<dbReference type="Proteomes" id="UP000008330">
    <property type="component" value="Chromosome"/>
</dbReference>
<dbReference type="GO" id="GO:0005737">
    <property type="term" value="C:cytoplasm"/>
    <property type="evidence" value="ECO:0007669"/>
    <property type="project" value="UniProtKB-SubCell"/>
</dbReference>
<dbReference type="GO" id="GO:0051539">
    <property type="term" value="F:4 iron, 4 sulfur cluster binding"/>
    <property type="evidence" value="ECO:0007669"/>
    <property type="project" value="UniProtKB-UniRule"/>
</dbReference>
<dbReference type="GO" id="GO:0016992">
    <property type="term" value="F:lipoate synthase activity"/>
    <property type="evidence" value="ECO:0007669"/>
    <property type="project" value="UniProtKB-UniRule"/>
</dbReference>
<dbReference type="GO" id="GO:0046872">
    <property type="term" value="F:metal ion binding"/>
    <property type="evidence" value="ECO:0007669"/>
    <property type="project" value="UniProtKB-KW"/>
</dbReference>
<dbReference type="CDD" id="cd01335">
    <property type="entry name" value="Radical_SAM"/>
    <property type="match status" value="1"/>
</dbReference>
<dbReference type="FunFam" id="3.20.20.70:FF:000186">
    <property type="entry name" value="Lipoyl synthase"/>
    <property type="match status" value="1"/>
</dbReference>
<dbReference type="Gene3D" id="3.20.20.70">
    <property type="entry name" value="Aldolase class I"/>
    <property type="match status" value="1"/>
</dbReference>
<dbReference type="HAMAP" id="MF_00206">
    <property type="entry name" value="Lipoyl_synth"/>
    <property type="match status" value="1"/>
</dbReference>
<dbReference type="InterPro" id="IPR013785">
    <property type="entry name" value="Aldolase_TIM"/>
</dbReference>
<dbReference type="InterPro" id="IPR006638">
    <property type="entry name" value="Elp3/MiaA/NifB-like_rSAM"/>
</dbReference>
<dbReference type="InterPro" id="IPR031691">
    <property type="entry name" value="LIAS_N"/>
</dbReference>
<dbReference type="InterPro" id="IPR003698">
    <property type="entry name" value="Lipoyl_synth"/>
</dbReference>
<dbReference type="InterPro" id="IPR007197">
    <property type="entry name" value="rSAM"/>
</dbReference>
<dbReference type="NCBIfam" id="TIGR00510">
    <property type="entry name" value="lipA"/>
    <property type="match status" value="1"/>
</dbReference>
<dbReference type="NCBIfam" id="NF004019">
    <property type="entry name" value="PRK05481.1"/>
    <property type="match status" value="1"/>
</dbReference>
<dbReference type="NCBIfam" id="NF009544">
    <property type="entry name" value="PRK12928.1"/>
    <property type="match status" value="1"/>
</dbReference>
<dbReference type="PANTHER" id="PTHR10949">
    <property type="entry name" value="LIPOYL SYNTHASE"/>
    <property type="match status" value="1"/>
</dbReference>
<dbReference type="PANTHER" id="PTHR10949:SF0">
    <property type="entry name" value="LIPOYL SYNTHASE, MITOCHONDRIAL"/>
    <property type="match status" value="1"/>
</dbReference>
<dbReference type="Pfam" id="PF16881">
    <property type="entry name" value="LIAS_N"/>
    <property type="match status" value="1"/>
</dbReference>
<dbReference type="Pfam" id="PF04055">
    <property type="entry name" value="Radical_SAM"/>
    <property type="match status" value="1"/>
</dbReference>
<dbReference type="PIRSF" id="PIRSF005963">
    <property type="entry name" value="Lipoyl_synth"/>
    <property type="match status" value="1"/>
</dbReference>
<dbReference type="SFLD" id="SFLDF00271">
    <property type="entry name" value="lipoyl_synthase"/>
    <property type="match status" value="1"/>
</dbReference>
<dbReference type="SFLD" id="SFLDS00029">
    <property type="entry name" value="Radical_SAM"/>
    <property type="match status" value="1"/>
</dbReference>
<dbReference type="SMART" id="SM00729">
    <property type="entry name" value="Elp3"/>
    <property type="match status" value="1"/>
</dbReference>
<dbReference type="SUPFAM" id="SSF102114">
    <property type="entry name" value="Radical SAM enzymes"/>
    <property type="match status" value="1"/>
</dbReference>
<dbReference type="PROSITE" id="PS51918">
    <property type="entry name" value="RADICAL_SAM"/>
    <property type="match status" value="1"/>
</dbReference>
<comment type="function">
    <text evidence="1">Catalyzes the radical-mediated insertion of two sulfur atoms into the C-6 and C-8 positions of the octanoyl moiety bound to the lipoyl domains of lipoate-dependent enzymes, thereby converting the octanoylated domains into lipoylated derivatives.</text>
</comment>
<comment type="catalytic activity">
    <reaction evidence="1">
        <text>[[Fe-S] cluster scaffold protein carrying a second [4Fe-4S](2+) cluster] + N(6)-octanoyl-L-lysyl-[protein] + 2 oxidized [2Fe-2S]-[ferredoxin] + 2 S-adenosyl-L-methionine + 4 H(+) = [[Fe-S] cluster scaffold protein] + N(6)-[(R)-dihydrolipoyl]-L-lysyl-[protein] + 4 Fe(3+) + 2 hydrogen sulfide + 2 5'-deoxyadenosine + 2 L-methionine + 2 reduced [2Fe-2S]-[ferredoxin]</text>
        <dbReference type="Rhea" id="RHEA:16585"/>
        <dbReference type="Rhea" id="RHEA-COMP:9928"/>
        <dbReference type="Rhea" id="RHEA-COMP:10000"/>
        <dbReference type="Rhea" id="RHEA-COMP:10001"/>
        <dbReference type="Rhea" id="RHEA-COMP:10475"/>
        <dbReference type="Rhea" id="RHEA-COMP:14568"/>
        <dbReference type="Rhea" id="RHEA-COMP:14569"/>
        <dbReference type="ChEBI" id="CHEBI:15378"/>
        <dbReference type="ChEBI" id="CHEBI:17319"/>
        <dbReference type="ChEBI" id="CHEBI:29034"/>
        <dbReference type="ChEBI" id="CHEBI:29919"/>
        <dbReference type="ChEBI" id="CHEBI:33722"/>
        <dbReference type="ChEBI" id="CHEBI:33737"/>
        <dbReference type="ChEBI" id="CHEBI:33738"/>
        <dbReference type="ChEBI" id="CHEBI:57844"/>
        <dbReference type="ChEBI" id="CHEBI:59789"/>
        <dbReference type="ChEBI" id="CHEBI:78809"/>
        <dbReference type="ChEBI" id="CHEBI:83100"/>
        <dbReference type="EC" id="2.8.1.8"/>
    </reaction>
</comment>
<comment type="cofactor">
    <cofactor evidence="1">
        <name>[4Fe-4S] cluster</name>
        <dbReference type="ChEBI" id="CHEBI:49883"/>
    </cofactor>
    <text evidence="1">Binds 2 [4Fe-4S] clusters per subunit. One cluster is coordinated with 3 cysteines and an exchangeable S-adenosyl-L-methionine.</text>
</comment>
<comment type="pathway">
    <text evidence="1">Protein modification; protein lipoylation via endogenous pathway; protein N(6)-(lipoyl)lysine from octanoyl-[acyl-carrier-protein]: step 2/2.</text>
</comment>
<comment type="subcellular location">
    <subcellularLocation>
        <location evidence="1">Cytoplasm</location>
    </subcellularLocation>
</comment>
<comment type="similarity">
    <text evidence="1">Belongs to the radical SAM superfamily. Lipoyl synthase family.</text>
</comment>
<name>LIPA_RHILW</name>
<reference key="1">
    <citation type="journal article" date="2010" name="Stand. Genomic Sci.">
        <title>Complete genome sequence of Rhizobium leguminosarum bv trifolii strain WSM2304, an effective microsymbiont of the South American clover Trifolium polymorphum.</title>
        <authorList>
            <person name="Reeve W."/>
            <person name="O'Hara G."/>
            <person name="Chain P."/>
            <person name="Ardley J."/>
            <person name="Brau L."/>
            <person name="Nandesena K."/>
            <person name="Tiwari R."/>
            <person name="Malfatti S."/>
            <person name="Kiss H."/>
            <person name="Lapidus A."/>
            <person name="Copeland A."/>
            <person name="Nolan M."/>
            <person name="Land M."/>
            <person name="Ivanova N."/>
            <person name="Mavromatis K."/>
            <person name="Markowitz V."/>
            <person name="Kyrpides N."/>
            <person name="Melino V."/>
            <person name="Denton M."/>
            <person name="Yates R."/>
            <person name="Howieson J."/>
        </authorList>
    </citation>
    <scope>NUCLEOTIDE SEQUENCE [LARGE SCALE GENOMIC DNA]</scope>
    <source>
        <strain>WSM2304</strain>
    </source>
</reference>
<keyword id="KW-0004">4Fe-4S</keyword>
<keyword id="KW-0963">Cytoplasm</keyword>
<keyword id="KW-0408">Iron</keyword>
<keyword id="KW-0411">Iron-sulfur</keyword>
<keyword id="KW-0479">Metal-binding</keyword>
<keyword id="KW-1185">Reference proteome</keyword>
<keyword id="KW-0949">S-adenosyl-L-methionine</keyword>
<keyword id="KW-0808">Transferase</keyword>
<proteinExistence type="inferred from homology"/>
<protein>
    <recommendedName>
        <fullName evidence="1">Lipoyl synthase</fullName>
        <ecNumber evidence="1">2.8.1.8</ecNumber>
    </recommendedName>
    <alternativeName>
        <fullName evidence="1">Lip-syn</fullName>
        <shortName evidence="1">LS</shortName>
    </alternativeName>
    <alternativeName>
        <fullName evidence="1">Lipoate synthase</fullName>
    </alternativeName>
    <alternativeName>
        <fullName evidence="1">Lipoic acid synthase</fullName>
    </alternativeName>
    <alternativeName>
        <fullName evidence="1">Sulfur insertion protein LipA</fullName>
    </alternativeName>
</protein>
<feature type="chain" id="PRO_1000099625" description="Lipoyl synthase">
    <location>
        <begin position="1"/>
        <end position="323"/>
    </location>
</feature>
<feature type="domain" description="Radical SAM core" evidence="2">
    <location>
        <begin position="73"/>
        <end position="289"/>
    </location>
</feature>
<feature type="binding site" evidence="1">
    <location>
        <position position="61"/>
    </location>
    <ligand>
        <name>[4Fe-4S] cluster</name>
        <dbReference type="ChEBI" id="CHEBI:49883"/>
        <label>1</label>
    </ligand>
</feature>
<feature type="binding site" evidence="1">
    <location>
        <position position="66"/>
    </location>
    <ligand>
        <name>[4Fe-4S] cluster</name>
        <dbReference type="ChEBI" id="CHEBI:49883"/>
        <label>1</label>
    </ligand>
</feature>
<feature type="binding site" evidence="1">
    <location>
        <position position="72"/>
    </location>
    <ligand>
        <name>[4Fe-4S] cluster</name>
        <dbReference type="ChEBI" id="CHEBI:49883"/>
        <label>1</label>
    </ligand>
</feature>
<feature type="binding site" evidence="1">
    <location>
        <position position="87"/>
    </location>
    <ligand>
        <name>[4Fe-4S] cluster</name>
        <dbReference type="ChEBI" id="CHEBI:49883"/>
        <label>2</label>
        <note>4Fe-4S-S-AdoMet</note>
    </ligand>
</feature>
<feature type="binding site" evidence="1">
    <location>
        <position position="91"/>
    </location>
    <ligand>
        <name>[4Fe-4S] cluster</name>
        <dbReference type="ChEBI" id="CHEBI:49883"/>
        <label>2</label>
        <note>4Fe-4S-S-AdoMet</note>
    </ligand>
</feature>
<feature type="binding site" evidence="1">
    <location>
        <position position="94"/>
    </location>
    <ligand>
        <name>[4Fe-4S] cluster</name>
        <dbReference type="ChEBI" id="CHEBI:49883"/>
        <label>2</label>
        <note>4Fe-4S-S-AdoMet</note>
    </ligand>
</feature>
<feature type="binding site" evidence="1">
    <location>
        <position position="300"/>
    </location>
    <ligand>
        <name>[4Fe-4S] cluster</name>
        <dbReference type="ChEBI" id="CHEBI:49883"/>
        <label>1</label>
    </ligand>
</feature>
<sequence length="323" mass="36142">MVTILDTINPDAKRVRHPEKAHRPDTEVMRKPDWIRVKAPTSKGYAETRAIVKEHKLVTVCEEAGCPNIGECWDKKHATFMIMGEICTRACAFCNVATGKPNALDMAEPENVAKAVKEMGLSHVVITSVDRDDLEDGGAEHFEKVIWAIRAASPATTIEILTPDFLKKPGALERVVAAKPDVFNHNMETVPGNYLTVRPGARYFHSIRLLQRVKELDPTMFTKSGIMVGLGEERNEVLQLMDDLRTADVDFLTIGQYLQPTRKHHKVESFVTPDEFKSYETVAYSKGFLMVASSPLTRSSHHAGDDFARLRAAREKKLLMAAE</sequence>
<organism>
    <name type="scientific">Rhizobium leguminosarum bv. trifolii (strain WSM2304)</name>
    <dbReference type="NCBI Taxonomy" id="395492"/>
    <lineage>
        <taxon>Bacteria</taxon>
        <taxon>Pseudomonadati</taxon>
        <taxon>Pseudomonadota</taxon>
        <taxon>Alphaproteobacteria</taxon>
        <taxon>Hyphomicrobiales</taxon>
        <taxon>Rhizobiaceae</taxon>
        <taxon>Rhizobium/Agrobacterium group</taxon>
        <taxon>Rhizobium</taxon>
    </lineage>
</organism>